<keyword id="KW-0386">Hypusine biosynthesis</keyword>
<keyword id="KW-0520">NAD</keyword>
<keyword id="KW-0808">Transferase</keyword>
<sequence length="317" mass="34422">MDFGASAKNLSTPVKGAKIVPNMTVDELVKEYAGCAFGAGRLAEAVDIYYEMLASGKTTKFFGLAGAMTPAGMRNIIADLIRDGYIDVLVTTGANMVHDTVEALGLHHYKGSDCANDIQLRHECIDRIYDVYLPDQHFTDLEEFLQGVYSGLPQENLSIRQVLTEIGKNLDDDSSILKTAAEMGVPVYCPALQDSVIGLQAWLYKEGNPLHVDAFADMHEFMDICYGAESAGTMLLGGGVPKNYILQSMLVTPRSFDYAIQLTMDRPETGGLSGATLDEAQSWGKVGEDAKSVTVYADSTITLPLIVSAVRTRLSKR</sequence>
<name>DHYS1_METMA</name>
<reference key="1">
    <citation type="journal article" date="2002" name="J. Mol. Microbiol. Biotechnol.">
        <title>The genome of Methanosarcina mazei: evidence for lateral gene transfer between Bacteria and Archaea.</title>
        <authorList>
            <person name="Deppenmeier U."/>
            <person name="Johann A."/>
            <person name="Hartsch T."/>
            <person name="Merkl R."/>
            <person name="Schmitz R.A."/>
            <person name="Martinez-Arias R."/>
            <person name="Henne A."/>
            <person name="Wiezer A."/>
            <person name="Baeumer S."/>
            <person name="Jacobi C."/>
            <person name="Brueggemann H."/>
            <person name="Lienard T."/>
            <person name="Christmann A."/>
            <person name="Boemecke M."/>
            <person name="Steckel S."/>
            <person name="Bhattacharyya A."/>
            <person name="Lykidis A."/>
            <person name="Overbeek R."/>
            <person name="Klenk H.-P."/>
            <person name="Gunsalus R.P."/>
            <person name="Fritz H.-J."/>
            <person name="Gottschalk G."/>
        </authorList>
    </citation>
    <scope>NUCLEOTIDE SEQUENCE [LARGE SCALE GENOMIC DNA]</scope>
    <source>
        <strain>ATCC BAA-159 / DSM 3647 / Goe1 / Go1 / JCM 11833 / OCM 88</strain>
    </source>
</reference>
<protein>
    <recommendedName>
        <fullName>Probable deoxyhypusine synthase 1</fullName>
        <shortName>DHS 1</shortName>
        <ecNumber>2.5.1.46</ecNumber>
    </recommendedName>
</protein>
<proteinExistence type="inferred from homology"/>
<evidence type="ECO:0000250" key="1"/>
<evidence type="ECO:0000305" key="2"/>
<gene>
    <name type="primary">dys1</name>
    <name type="ordered locus">MM_2082</name>
</gene>
<feature type="chain" id="PRO_0000134497" description="Probable deoxyhypusine synthase 1">
    <location>
        <begin position="1"/>
        <end position="317"/>
    </location>
</feature>
<feature type="active site" description="Nucleophile" evidence="1">
    <location>
        <position position="285"/>
    </location>
</feature>
<organism>
    <name type="scientific">Methanosarcina mazei (strain ATCC BAA-159 / DSM 3647 / Goe1 / Go1 / JCM 11833 / OCM 88)</name>
    <name type="common">Methanosarcina frisia</name>
    <dbReference type="NCBI Taxonomy" id="192952"/>
    <lineage>
        <taxon>Archaea</taxon>
        <taxon>Methanobacteriati</taxon>
        <taxon>Methanobacteriota</taxon>
        <taxon>Stenosarchaea group</taxon>
        <taxon>Methanomicrobia</taxon>
        <taxon>Methanosarcinales</taxon>
        <taxon>Methanosarcinaceae</taxon>
        <taxon>Methanosarcina</taxon>
    </lineage>
</organism>
<dbReference type="EC" id="2.5.1.46"/>
<dbReference type="EMBL" id="AE008384">
    <property type="protein sequence ID" value="AAM31778.1"/>
    <property type="molecule type" value="Genomic_DNA"/>
</dbReference>
<dbReference type="RefSeq" id="WP_011034014.1">
    <property type="nucleotide sequence ID" value="NC_003901.1"/>
</dbReference>
<dbReference type="SMR" id="Q8PV89"/>
<dbReference type="GeneID" id="1480424"/>
<dbReference type="KEGG" id="mma:MM_2082"/>
<dbReference type="PATRIC" id="fig|192952.21.peg.2390"/>
<dbReference type="eggNOG" id="arCOG04142">
    <property type="taxonomic scope" value="Archaea"/>
</dbReference>
<dbReference type="HOGENOM" id="CLU_039781_1_0_2"/>
<dbReference type="UniPathway" id="UPA00354"/>
<dbReference type="Proteomes" id="UP000000595">
    <property type="component" value="Chromosome"/>
</dbReference>
<dbReference type="GO" id="GO:0005737">
    <property type="term" value="C:cytoplasm"/>
    <property type="evidence" value="ECO:0007669"/>
    <property type="project" value="TreeGrafter"/>
</dbReference>
<dbReference type="GO" id="GO:0034038">
    <property type="term" value="F:deoxyhypusine synthase activity"/>
    <property type="evidence" value="ECO:0007669"/>
    <property type="project" value="UniProtKB-UniRule"/>
</dbReference>
<dbReference type="FunFam" id="3.40.910.10:FF:000012">
    <property type="entry name" value="Probable deoxyhypusine synthase"/>
    <property type="match status" value="1"/>
</dbReference>
<dbReference type="Gene3D" id="3.40.910.10">
    <property type="entry name" value="Deoxyhypusine synthase"/>
    <property type="match status" value="1"/>
</dbReference>
<dbReference type="HAMAP" id="MF_00153">
    <property type="entry name" value="DHS"/>
    <property type="match status" value="1"/>
</dbReference>
<dbReference type="InterPro" id="IPR022899">
    <property type="entry name" value="Deoxyhypus_synthase_arc"/>
</dbReference>
<dbReference type="InterPro" id="IPR002773">
    <property type="entry name" value="Deoxyhypusine_synthase"/>
</dbReference>
<dbReference type="InterPro" id="IPR036982">
    <property type="entry name" value="Deoxyhypusine_synthase_sf"/>
</dbReference>
<dbReference type="InterPro" id="IPR029035">
    <property type="entry name" value="DHS-like_NAD/FAD-binding_dom"/>
</dbReference>
<dbReference type="NCBIfam" id="TIGR00321">
    <property type="entry name" value="dhys"/>
    <property type="match status" value="1"/>
</dbReference>
<dbReference type="NCBIfam" id="NF002630">
    <property type="entry name" value="PRK02301.1"/>
    <property type="match status" value="1"/>
</dbReference>
<dbReference type="PANTHER" id="PTHR11703">
    <property type="entry name" value="DEOXYHYPUSINE SYNTHASE"/>
    <property type="match status" value="1"/>
</dbReference>
<dbReference type="PANTHER" id="PTHR11703:SF2">
    <property type="entry name" value="DEOXYHYPUSINE SYNTHASE-LIKE PROTEIN"/>
    <property type="match status" value="1"/>
</dbReference>
<dbReference type="Pfam" id="PF01916">
    <property type="entry name" value="DS"/>
    <property type="match status" value="1"/>
</dbReference>
<dbReference type="SUPFAM" id="SSF52467">
    <property type="entry name" value="DHS-like NAD/FAD-binding domain"/>
    <property type="match status" value="1"/>
</dbReference>
<comment type="function">
    <text evidence="1">Catalyzes the NAD-dependent oxidative cleavage of spermidine and the subsequent transfer of the butylamine moiety of spermidine to the epsilon-amino group of a specific lysine residue of the eIF-5A precursor protein to form the intermediate deoxyhypusine residue.</text>
</comment>
<comment type="catalytic activity">
    <reaction>
        <text>[eIF5A protein]-L-lysine + spermidine = [eIF5A protein]-deoxyhypusine + propane-1,3-diamine</text>
        <dbReference type="Rhea" id="RHEA:33299"/>
        <dbReference type="Rhea" id="RHEA-COMP:10143"/>
        <dbReference type="Rhea" id="RHEA-COMP:10144"/>
        <dbReference type="ChEBI" id="CHEBI:29969"/>
        <dbReference type="ChEBI" id="CHEBI:57484"/>
        <dbReference type="ChEBI" id="CHEBI:57834"/>
        <dbReference type="ChEBI" id="CHEBI:82657"/>
        <dbReference type="EC" id="2.5.1.46"/>
    </reaction>
</comment>
<comment type="cofactor">
    <cofactor evidence="1">
        <name>NAD(+)</name>
        <dbReference type="ChEBI" id="CHEBI:57540"/>
    </cofactor>
</comment>
<comment type="pathway">
    <text>Protein modification; eIF5A hypusination.</text>
</comment>
<comment type="similarity">
    <text evidence="2">Belongs to the deoxyhypusine synthase family.</text>
</comment>
<accession>Q8PV89</accession>